<gene>
    <name evidence="1" type="primary">selU</name>
    <name type="ordered locus">Sfri_0119</name>
</gene>
<keyword id="KW-1185">Reference proteome</keyword>
<keyword id="KW-0711">Selenium</keyword>
<keyword id="KW-0808">Transferase</keyword>
<feature type="chain" id="PRO_0000292710" description="tRNA 2-selenouridine synthase">
    <location>
        <begin position="1"/>
        <end position="366"/>
    </location>
</feature>
<feature type="domain" description="Rhodanese" evidence="1">
    <location>
        <begin position="14"/>
        <end position="137"/>
    </location>
</feature>
<feature type="active site" description="S-selanylcysteine intermediate" evidence="1">
    <location>
        <position position="97"/>
    </location>
</feature>
<organism>
    <name type="scientific">Shewanella frigidimarina (strain NCIMB 400)</name>
    <dbReference type="NCBI Taxonomy" id="318167"/>
    <lineage>
        <taxon>Bacteria</taxon>
        <taxon>Pseudomonadati</taxon>
        <taxon>Pseudomonadota</taxon>
        <taxon>Gammaproteobacteria</taxon>
        <taxon>Alteromonadales</taxon>
        <taxon>Shewanellaceae</taxon>
        <taxon>Shewanella</taxon>
    </lineage>
</organism>
<protein>
    <recommendedName>
        <fullName evidence="1">tRNA 2-selenouridine synthase</fullName>
        <ecNumber evidence="1">2.9.1.3</ecNumber>
    </recommendedName>
</protein>
<proteinExistence type="inferred from homology"/>
<reference key="1">
    <citation type="submission" date="2006-08" db="EMBL/GenBank/DDBJ databases">
        <title>Complete sequence of Shewanella frigidimarina NCIMB 400.</title>
        <authorList>
            <consortium name="US DOE Joint Genome Institute"/>
            <person name="Copeland A."/>
            <person name="Lucas S."/>
            <person name="Lapidus A."/>
            <person name="Barry K."/>
            <person name="Detter J.C."/>
            <person name="Glavina del Rio T."/>
            <person name="Hammon N."/>
            <person name="Israni S."/>
            <person name="Dalin E."/>
            <person name="Tice H."/>
            <person name="Pitluck S."/>
            <person name="Fredrickson J.K."/>
            <person name="Kolker E."/>
            <person name="McCuel L.A."/>
            <person name="DiChristina T."/>
            <person name="Nealson K.H."/>
            <person name="Newman D."/>
            <person name="Tiedje J.M."/>
            <person name="Zhou J."/>
            <person name="Romine M.F."/>
            <person name="Culley D.E."/>
            <person name="Serres M."/>
            <person name="Chertkov O."/>
            <person name="Brettin T."/>
            <person name="Bruce D."/>
            <person name="Han C."/>
            <person name="Tapia R."/>
            <person name="Gilna P."/>
            <person name="Schmutz J."/>
            <person name="Larimer F."/>
            <person name="Land M."/>
            <person name="Hauser L."/>
            <person name="Kyrpides N."/>
            <person name="Mikhailova N."/>
            <person name="Richardson P."/>
        </authorList>
    </citation>
    <scope>NUCLEOTIDE SEQUENCE [LARGE SCALE GENOMIC DNA]</scope>
    <source>
        <strain>NCIMB 400</strain>
    </source>
</reference>
<sequence length="366" mass="41556">MSEVIPSSEYGRLLLENRPLIDVRAPIEFTKGAFGHSINLPLMQDGEREKVGTCYKKRGQEAAIALGHELVKGKVKQQRIDAWLAQLSQHPDSYLYCFRGGLRSKLSQQWIKESGMDIPYIEGGYKAIRSFLINTIEQAPSQSKVLILSGITGSGKTEVIHQRDESVDLEGLANHKGSSFGKNIDPQPSQINFENNLAVALLKHQQQQHNHLLLEDESMLIGRSALPKHFYSAMQQADIIVLDEPLDARLPRLLNDYVEQKLTDYVSGLGEQAGFDAFKAYLAQSLLGIRKRLGGKQHQELQDLVDNALNVQQSQNDTSKHLDWINLLLDIYYDPMYLYQLEKKQDRVIFQGDRQAIHQWLDKHKS</sequence>
<evidence type="ECO:0000255" key="1">
    <source>
        <dbReference type="HAMAP-Rule" id="MF_01622"/>
    </source>
</evidence>
<comment type="function">
    <text evidence="1">Involved in the post-transcriptional modification of the uridine at the wobble position (U34) of tRNA(Lys), tRNA(Glu) and tRNA(Gln). Catalyzes the conversion of 2-thiouridine (S2U-RNA) to 2-selenouridine (Se2U-RNA). Acts in a two-step process involving geranylation of 2-thiouridine (S2U) to S-geranyl-2-thiouridine (geS2U) and subsequent selenation of the latter derivative to 2-selenouridine (Se2U) in the tRNA chain.</text>
</comment>
<comment type="catalytic activity">
    <reaction evidence="1">
        <text>5-methylaminomethyl-2-thiouridine(34) in tRNA + selenophosphate + (2E)-geranyl diphosphate + H2O + H(+) = 5-methylaminomethyl-2-selenouridine(34) in tRNA + (2E)-thiogeraniol + phosphate + diphosphate</text>
        <dbReference type="Rhea" id="RHEA:42716"/>
        <dbReference type="Rhea" id="RHEA-COMP:10195"/>
        <dbReference type="Rhea" id="RHEA-COMP:10196"/>
        <dbReference type="ChEBI" id="CHEBI:15377"/>
        <dbReference type="ChEBI" id="CHEBI:15378"/>
        <dbReference type="ChEBI" id="CHEBI:16144"/>
        <dbReference type="ChEBI" id="CHEBI:33019"/>
        <dbReference type="ChEBI" id="CHEBI:43474"/>
        <dbReference type="ChEBI" id="CHEBI:58057"/>
        <dbReference type="ChEBI" id="CHEBI:74455"/>
        <dbReference type="ChEBI" id="CHEBI:82743"/>
        <dbReference type="ChEBI" id="CHEBI:143703"/>
        <dbReference type="EC" id="2.9.1.3"/>
    </reaction>
    <physiologicalReaction direction="left-to-right" evidence="1">
        <dbReference type="Rhea" id="RHEA:42717"/>
    </physiologicalReaction>
</comment>
<comment type="catalytic activity">
    <reaction evidence="1">
        <text>5-methylaminomethyl-2-thiouridine(34) in tRNA + (2E)-geranyl diphosphate = 5-methylaminomethyl-S-(2E)-geranyl-thiouridine(34) in tRNA + diphosphate</text>
        <dbReference type="Rhea" id="RHEA:14085"/>
        <dbReference type="Rhea" id="RHEA-COMP:10195"/>
        <dbReference type="Rhea" id="RHEA-COMP:14654"/>
        <dbReference type="ChEBI" id="CHEBI:33019"/>
        <dbReference type="ChEBI" id="CHEBI:58057"/>
        <dbReference type="ChEBI" id="CHEBI:74455"/>
        <dbReference type="ChEBI" id="CHEBI:140632"/>
    </reaction>
    <physiologicalReaction direction="left-to-right" evidence="1">
        <dbReference type="Rhea" id="RHEA:14086"/>
    </physiologicalReaction>
</comment>
<comment type="catalytic activity">
    <reaction evidence="1">
        <text>5-methylaminomethyl-S-(2E)-geranyl-thiouridine(34) in tRNA + selenophosphate + H(+) = 5-methylaminomethyl-2-(Se-phospho)selenouridine(34) in tRNA + (2E)-thiogeraniol</text>
        <dbReference type="Rhea" id="RHEA:60172"/>
        <dbReference type="Rhea" id="RHEA-COMP:14654"/>
        <dbReference type="Rhea" id="RHEA-COMP:15523"/>
        <dbReference type="ChEBI" id="CHEBI:15378"/>
        <dbReference type="ChEBI" id="CHEBI:16144"/>
        <dbReference type="ChEBI" id="CHEBI:140632"/>
        <dbReference type="ChEBI" id="CHEBI:143702"/>
        <dbReference type="ChEBI" id="CHEBI:143703"/>
    </reaction>
    <physiologicalReaction direction="left-to-right" evidence="1">
        <dbReference type="Rhea" id="RHEA:60173"/>
    </physiologicalReaction>
</comment>
<comment type="catalytic activity">
    <reaction evidence="1">
        <text>5-methylaminomethyl-2-(Se-phospho)selenouridine(34) in tRNA + H2O = 5-methylaminomethyl-2-selenouridine(34) in tRNA + phosphate</text>
        <dbReference type="Rhea" id="RHEA:60176"/>
        <dbReference type="Rhea" id="RHEA-COMP:10196"/>
        <dbReference type="Rhea" id="RHEA-COMP:15523"/>
        <dbReference type="ChEBI" id="CHEBI:15377"/>
        <dbReference type="ChEBI" id="CHEBI:43474"/>
        <dbReference type="ChEBI" id="CHEBI:82743"/>
        <dbReference type="ChEBI" id="CHEBI:143702"/>
    </reaction>
    <physiologicalReaction direction="left-to-right" evidence="1">
        <dbReference type="Rhea" id="RHEA:60177"/>
    </physiologicalReaction>
</comment>
<comment type="subunit">
    <text evidence="1">Monomer.</text>
</comment>
<comment type="similarity">
    <text evidence="1">Belongs to the SelU family.</text>
</comment>
<dbReference type="EC" id="2.9.1.3" evidence="1"/>
<dbReference type="EMBL" id="CP000447">
    <property type="protein sequence ID" value="ABI69982.1"/>
    <property type="molecule type" value="Genomic_DNA"/>
</dbReference>
<dbReference type="RefSeq" id="WP_011635611.1">
    <property type="nucleotide sequence ID" value="NC_008345.1"/>
</dbReference>
<dbReference type="SMR" id="Q089T3"/>
<dbReference type="STRING" id="318167.Sfri_0119"/>
<dbReference type="KEGG" id="sfr:Sfri_0119"/>
<dbReference type="eggNOG" id="COG2603">
    <property type="taxonomic scope" value="Bacteria"/>
</dbReference>
<dbReference type="HOGENOM" id="CLU_043456_1_0_6"/>
<dbReference type="OrthoDB" id="9808735at2"/>
<dbReference type="Proteomes" id="UP000000684">
    <property type="component" value="Chromosome"/>
</dbReference>
<dbReference type="GO" id="GO:0016765">
    <property type="term" value="F:transferase activity, transferring alkyl or aryl (other than methyl) groups"/>
    <property type="evidence" value="ECO:0007669"/>
    <property type="project" value="UniProtKB-UniRule"/>
</dbReference>
<dbReference type="GO" id="GO:0043828">
    <property type="term" value="F:tRNA 2-selenouridine synthase activity"/>
    <property type="evidence" value="ECO:0007669"/>
    <property type="project" value="UniProtKB-EC"/>
</dbReference>
<dbReference type="GO" id="GO:0002098">
    <property type="term" value="P:tRNA wobble uridine modification"/>
    <property type="evidence" value="ECO:0007669"/>
    <property type="project" value="UniProtKB-UniRule"/>
</dbReference>
<dbReference type="Gene3D" id="3.40.250.10">
    <property type="entry name" value="Rhodanese-like domain"/>
    <property type="match status" value="1"/>
</dbReference>
<dbReference type="HAMAP" id="MF_01622">
    <property type="entry name" value="tRNA_sel_U_synth"/>
    <property type="match status" value="1"/>
</dbReference>
<dbReference type="InterPro" id="IPR027417">
    <property type="entry name" value="P-loop_NTPase"/>
</dbReference>
<dbReference type="InterPro" id="IPR001763">
    <property type="entry name" value="Rhodanese-like_dom"/>
</dbReference>
<dbReference type="InterPro" id="IPR036873">
    <property type="entry name" value="Rhodanese-like_dom_sf"/>
</dbReference>
<dbReference type="InterPro" id="IPR017582">
    <property type="entry name" value="SelU"/>
</dbReference>
<dbReference type="NCBIfam" id="NF008750">
    <property type="entry name" value="PRK11784.1-2"/>
    <property type="match status" value="1"/>
</dbReference>
<dbReference type="NCBIfam" id="NF008751">
    <property type="entry name" value="PRK11784.1-3"/>
    <property type="match status" value="1"/>
</dbReference>
<dbReference type="NCBIfam" id="TIGR03167">
    <property type="entry name" value="tRNA_sel_U_synt"/>
    <property type="match status" value="1"/>
</dbReference>
<dbReference type="PANTHER" id="PTHR30401">
    <property type="entry name" value="TRNA 2-SELENOURIDINE SYNTHASE"/>
    <property type="match status" value="1"/>
</dbReference>
<dbReference type="PANTHER" id="PTHR30401:SF0">
    <property type="entry name" value="TRNA 2-SELENOURIDINE SYNTHASE"/>
    <property type="match status" value="1"/>
</dbReference>
<dbReference type="SMART" id="SM00450">
    <property type="entry name" value="RHOD"/>
    <property type="match status" value="1"/>
</dbReference>
<dbReference type="SUPFAM" id="SSF52540">
    <property type="entry name" value="P-loop containing nucleoside triphosphate hydrolases"/>
    <property type="match status" value="1"/>
</dbReference>
<dbReference type="SUPFAM" id="SSF52821">
    <property type="entry name" value="Rhodanese/Cell cycle control phosphatase"/>
    <property type="match status" value="1"/>
</dbReference>
<dbReference type="PROSITE" id="PS50206">
    <property type="entry name" value="RHODANESE_3"/>
    <property type="match status" value="1"/>
</dbReference>
<name>SELU_SHEFN</name>
<accession>Q089T3</accession>